<protein>
    <recommendedName>
        <fullName>Putative WUSCHEL-related homeobox 2</fullName>
    </recommendedName>
    <alternativeName>
        <fullName>OsWOX2</fullName>
    </alternativeName>
</protein>
<comment type="function">
    <text evidence="1">Transcription factor which may be involved in developmental processes.</text>
</comment>
<comment type="subcellular location">
    <subcellularLocation>
        <location evidence="2">Nucleus</location>
    </subcellularLocation>
</comment>
<comment type="similarity">
    <text evidence="4">Belongs to the WUS homeobox family.</text>
</comment>
<comment type="sequence caution" evidence="4">
    <conflict type="erroneous gene model prediction">
        <sequence resource="EMBL-CDS" id="BAA90492"/>
    </conflict>
</comment>
<comment type="sequence caution" evidence="4">
    <conflict type="erroneous initiation">
        <sequence resource="EMBL-CDS" id="EAZ32679"/>
    </conflict>
</comment>
<gene>
    <name type="primary">WOX2</name>
    <name type="ordered locus">Os05g0118700</name>
    <name type="ordered locus">LOC_Os05g02730</name>
    <name type="ORF">OsJ_016162</name>
    <name type="ORF">P0496H07.20</name>
</gene>
<keyword id="KW-0217">Developmental protein</keyword>
<keyword id="KW-0238">DNA-binding</keyword>
<keyword id="KW-0371">Homeobox</keyword>
<keyword id="KW-0539">Nucleus</keyword>
<keyword id="KW-1185">Reference proteome</keyword>
<keyword id="KW-0804">Transcription</keyword>
<keyword id="KW-0805">Transcription regulation</keyword>
<name>WOX2_ORYSJ</name>
<sequence length="286" mass="29894">MAPAVQQQQSGGGGGSTGAAAVGSTTRWCPTPEQLMMLEEMYRGGLRTPNAAQIQQITAHLSTYGRIEGKNVFYWFQNHKARDRQKLRRRLCISHHLLSCAHYYHHHLAAAAAVVPPPQLLPPLHPSSSSSSCGGGLIDHANSLLSPTSATTPTSAAAAAAAAAYTTSYYYPFTAAAAPPPPRTSPAASPLFHYNQGGGGVVLPAAEAIGRSSSSSDYSLGKLVDNFGVALEETFPAQPQQPATTMAMTAVVDTTAVAAAAGGFCRPLKTLDLFPGGLKEEQHDVV</sequence>
<organism>
    <name type="scientific">Oryza sativa subsp. japonica</name>
    <name type="common">Rice</name>
    <dbReference type="NCBI Taxonomy" id="39947"/>
    <lineage>
        <taxon>Eukaryota</taxon>
        <taxon>Viridiplantae</taxon>
        <taxon>Streptophyta</taxon>
        <taxon>Embryophyta</taxon>
        <taxon>Tracheophyta</taxon>
        <taxon>Spermatophyta</taxon>
        <taxon>Magnoliopsida</taxon>
        <taxon>Liliopsida</taxon>
        <taxon>Poales</taxon>
        <taxon>Poaceae</taxon>
        <taxon>BOP clade</taxon>
        <taxon>Oryzoideae</taxon>
        <taxon>Oryzeae</taxon>
        <taxon>Oryzinae</taxon>
        <taxon>Oryza</taxon>
        <taxon>Oryza sativa</taxon>
    </lineage>
</organism>
<reference key="1">
    <citation type="journal article" date="2005" name="Mol. Genet. Genomics">
        <title>A fine physical map of the rice chromosome 5.</title>
        <authorList>
            <person name="Cheng C.-H."/>
            <person name="Chung M.C."/>
            <person name="Liu S.-M."/>
            <person name="Chen S.-K."/>
            <person name="Kao F.Y."/>
            <person name="Lin S.-J."/>
            <person name="Hsiao S.-H."/>
            <person name="Tseng I.C."/>
            <person name="Hsing Y.-I.C."/>
            <person name="Wu H.-P."/>
            <person name="Chen C.-S."/>
            <person name="Shaw J.-F."/>
            <person name="Wu J."/>
            <person name="Matsumoto T."/>
            <person name="Sasaki T."/>
            <person name="Chen H.-C."/>
            <person name="Chow T.-Y."/>
        </authorList>
    </citation>
    <scope>NUCLEOTIDE SEQUENCE [LARGE SCALE GENOMIC DNA]</scope>
    <source>
        <strain>cv. Nipponbare</strain>
    </source>
</reference>
<reference key="2">
    <citation type="journal article" date="2005" name="Nature">
        <title>The map-based sequence of the rice genome.</title>
        <authorList>
            <consortium name="International rice genome sequencing project (IRGSP)"/>
        </authorList>
    </citation>
    <scope>NUCLEOTIDE SEQUENCE [LARGE SCALE GENOMIC DNA]</scope>
    <source>
        <strain>cv. Nipponbare</strain>
    </source>
</reference>
<reference key="3">
    <citation type="journal article" date="2013" name="Rice">
        <title>Improvement of the Oryza sativa Nipponbare reference genome using next generation sequence and optical map data.</title>
        <authorList>
            <person name="Kawahara Y."/>
            <person name="de la Bastide M."/>
            <person name="Hamilton J.P."/>
            <person name="Kanamori H."/>
            <person name="McCombie W.R."/>
            <person name="Ouyang S."/>
            <person name="Schwartz D.C."/>
            <person name="Tanaka T."/>
            <person name="Wu J."/>
            <person name="Zhou S."/>
            <person name="Childs K.L."/>
            <person name="Davidson R.M."/>
            <person name="Lin H."/>
            <person name="Quesada-Ocampo L."/>
            <person name="Vaillancourt B."/>
            <person name="Sakai H."/>
            <person name="Lee S.S."/>
            <person name="Kim J."/>
            <person name="Numa H."/>
            <person name="Itoh T."/>
            <person name="Buell C.R."/>
            <person name="Matsumoto T."/>
        </authorList>
    </citation>
    <scope>GENOME REANNOTATION</scope>
    <source>
        <strain>cv. Nipponbare</strain>
    </source>
</reference>
<reference key="4">
    <citation type="journal article" date="2005" name="PLoS Biol.">
        <title>The genomes of Oryza sativa: a history of duplications.</title>
        <authorList>
            <person name="Yu J."/>
            <person name="Wang J."/>
            <person name="Lin W."/>
            <person name="Li S."/>
            <person name="Li H."/>
            <person name="Zhou J."/>
            <person name="Ni P."/>
            <person name="Dong W."/>
            <person name="Hu S."/>
            <person name="Zeng C."/>
            <person name="Zhang J."/>
            <person name="Zhang Y."/>
            <person name="Li R."/>
            <person name="Xu Z."/>
            <person name="Li S."/>
            <person name="Li X."/>
            <person name="Zheng H."/>
            <person name="Cong L."/>
            <person name="Lin L."/>
            <person name="Yin J."/>
            <person name="Geng J."/>
            <person name="Li G."/>
            <person name="Shi J."/>
            <person name="Liu J."/>
            <person name="Lv H."/>
            <person name="Li J."/>
            <person name="Wang J."/>
            <person name="Deng Y."/>
            <person name="Ran L."/>
            <person name="Shi X."/>
            <person name="Wang X."/>
            <person name="Wu Q."/>
            <person name="Li C."/>
            <person name="Ren X."/>
            <person name="Wang J."/>
            <person name="Wang X."/>
            <person name="Li D."/>
            <person name="Liu D."/>
            <person name="Zhang X."/>
            <person name="Ji Z."/>
            <person name="Zhao W."/>
            <person name="Sun Y."/>
            <person name="Zhang Z."/>
            <person name="Bao J."/>
            <person name="Han Y."/>
            <person name="Dong L."/>
            <person name="Ji J."/>
            <person name="Chen P."/>
            <person name="Wu S."/>
            <person name="Liu J."/>
            <person name="Xiao Y."/>
            <person name="Bu D."/>
            <person name="Tan J."/>
            <person name="Yang L."/>
            <person name="Ye C."/>
            <person name="Zhang J."/>
            <person name="Xu J."/>
            <person name="Zhou Y."/>
            <person name="Yu Y."/>
            <person name="Zhang B."/>
            <person name="Zhuang S."/>
            <person name="Wei H."/>
            <person name="Liu B."/>
            <person name="Lei M."/>
            <person name="Yu H."/>
            <person name="Li Y."/>
            <person name="Xu H."/>
            <person name="Wei S."/>
            <person name="He X."/>
            <person name="Fang L."/>
            <person name="Zhang Z."/>
            <person name="Zhang Y."/>
            <person name="Huang X."/>
            <person name="Su Z."/>
            <person name="Tong W."/>
            <person name="Li J."/>
            <person name="Tong Z."/>
            <person name="Li S."/>
            <person name="Ye J."/>
            <person name="Wang L."/>
            <person name="Fang L."/>
            <person name="Lei T."/>
            <person name="Chen C.-S."/>
            <person name="Chen H.-C."/>
            <person name="Xu Z."/>
            <person name="Li H."/>
            <person name="Huang H."/>
            <person name="Zhang F."/>
            <person name="Xu H."/>
            <person name="Li N."/>
            <person name="Zhao C."/>
            <person name="Li S."/>
            <person name="Dong L."/>
            <person name="Huang Y."/>
            <person name="Li L."/>
            <person name="Xi Y."/>
            <person name="Qi Q."/>
            <person name="Li W."/>
            <person name="Zhang B."/>
            <person name="Hu W."/>
            <person name="Zhang Y."/>
            <person name="Tian X."/>
            <person name="Jiao Y."/>
            <person name="Liang X."/>
            <person name="Jin J."/>
            <person name="Gao L."/>
            <person name="Zheng W."/>
            <person name="Hao B."/>
            <person name="Liu S.-M."/>
            <person name="Wang W."/>
            <person name="Yuan L."/>
            <person name="Cao M."/>
            <person name="McDermott J."/>
            <person name="Samudrala R."/>
            <person name="Wang J."/>
            <person name="Wong G.K.-S."/>
            <person name="Yang H."/>
        </authorList>
    </citation>
    <scope>NUCLEOTIDE SEQUENCE [LARGE SCALE GENOMIC DNA]</scope>
    <source>
        <strain>cv. Nipponbare</strain>
    </source>
</reference>
<reference key="5">
    <citation type="journal article" date="2007" name="Plant Physiol.">
        <title>A WUSCHEL-LIKE HOMEOBOX gene represses a YABBY gene expression required for rice leaf development.</title>
        <authorList>
            <person name="Dai M."/>
            <person name="Hu Y."/>
            <person name="Zhao Y."/>
            <person name="Liu H."/>
            <person name="Zhou D.-X."/>
        </authorList>
    </citation>
    <scope>NOMENCLATURE</scope>
</reference>
<proteinExistence type="inferred from homology"/>
<feature type="chain" id="PRO_0000308635" description="Putative WUSCHEL-related homeobox 2">
    <location>
        <begin position="1"/>
        <end position="286"/>
    </location>
</feature>
<feature type="DNA-binding region" description="Homeobox; WUS-type" evidence="2">
    <location>
        <begin position="23"/>
        <end position="87"/>
    </location>
</feature>
<feature type="region of interest" description="Disordered" evidence="3">
    <location>
        <begin position="1"/>
        <end position="25"/>
    </location>
</feature>
<dbReference type="EMBL" id="AC078977">
    <property type="protein sequence ID" value="AAV44211.1"/>
    <property type="molecule type" value="Genomic_DNA"/>
</dbReference>
<dbReference type="EMBL" id="AP001111">
    <property type="protein sequence ID" value="BAA90492.1"/>
    <property type="status" value="ALT_SEQ"/>
    <property type="molecule type" value="Genomic_DNA"/>
</dbReference>
<dbReference type="EMBL" id="AP014961">
    <property type="protein sequence ID" value="BAS91992.1"/>
    <property type="molecule type" value="Genomic_DNA"/>
</dbReference>
<dbReference type="EMBL" id="CM000142">
    <property type="protein sequence ID" value="EAZ32679.1"/>
    <property type="status" value="ALT_INIT"/>
    <property type="molecule type" value="Genomic_DNA"/>
</dbReference>
<dbReference type="SMR" id="Q5W7C3"/>
<dbReference type="FunCoup" id="Q5W7C3">
    <property type="interactions" value="534"/>
</dbReference>
<dbReference type="PaxDb" id="39947-Q5W7C3"/>
<dbReference type="EnsemblPlants" id="Os05t0118700-01">
    <property type="protein sequence ID" value="Os05t0118700-01"/>
    <property type="gene ID" value="Os05g0118700"/>
</dbReference>
<dbReference type="GeneID" id="107275686"/>
<dbReference type="Gramene" id="Os05t0118700-01">
    <property type="protein sequence ID" value="Os05t0118700-01"/>
    <property type="gene ID" value="Os05g0118700"/>
</dbReference>
<dbReference type="KEGG" id="osa:107275686"/>
<dbReference type="eggNOG" id="ENOG502S13K">
    <property type="taxonomic scope" value="Eukaryota"/>
</dbReference>
<dbReference type="HOGENOM" id="CLU_070454_1_0_1"/>
<dbReference type="InParanoid" id="Q5W7C3"/>
<dbReference type="OMA" id="PSRCVGA"/>
<dbReference type="OrthoDB" id="1932526at2759"/>
<dbReference type="Proteomes" id="UP000000763">
    <property type="component" value="Chromosome 5"/>
</dbReference>
<dbReference type="Proteomes" id="UP000007752">
    <property type="component" value="Chromosome 5"/>
</dbReference>
<dbReference type="Proteomes" id="UP000059680">
    <property type="component" value="Chromosome 5"/>
</dbReference>
<dbReference type="GO" id="GO:0005634">
    <property type="term" value="C:nucleus"/>
    <property type="evidence" value="ECO:0007669"/>
    <property type="project" value="UniProtKB-SubCell"/>
</dbReference>
<dbReference type="GO" id="GO:0003677">
    <property type="term" value="F:DNA binding"/>
    <property type="evidence" value="ECO:0007669"/>
    <property type="project" value="UniProtKB-KW"/>
</dbReference>
<dbReference type="GO" id="GO:0003700">
    <property type="term" value="F:DNA-binding transcription factor activity"/>
    <property type="evidence" value="ECO:0007669"/>
    <property type="project" value="InterPro"/>
</dbReference>
<dbReference type="GO" id="GO:0099402">
    <property type="term" value="P:plant organ development"/>
    <property type="evidence" value="ECO:0007669"/>
    <property type="project" value="InterPro"/>
</dbReference>
<dbReference type="CDD" id="cd00086">
    <property type="entry name" value="homeodomain"/>
    <property type="match status" value="1"/>
</dbReference>
<dbReference type="FunFam" id="1.10.10.60:FF:000146">
    <property type="entry name" value="WUSCHEL-related homeobox 4"/>
    <property type="match status" value="1"/>
</dbReference>
<dbReference type="Gene3D" id="1.10.10.60">
    <property type="entry name" value="Homeodomain-like"/>
    <property type="match status" value="1"/>
</dbReference>
<dbReference type="InterPro" id="IPR001356">
    <property type="entry name" value="HD"/>
</dbReference>
<dbReference type="InterPro" id="IPR009057">
    <property type="entry name" value="Homeodomain-like_sf"/>
</dbReference>
<dbReference type="InterPro" id="IPR044555">
    <property type="entry name" value="WUSCHEL-like"/>
</dbReference>
<dbReference type="PANTHER" id="PTHR45940">
    <property type="entry name" value="WUSCHEL-RELATED HOMEOBOX 1-RELATED"/>
    <property type="match status" value="1"/>
</dbReference>
<dbReference type="PANTHER" id="PTHR45940:SF46">
    <property type="entry name" value="WUSCHEL-RELATED HOMEOBOX 2-RELATED"/>
    <property type="match status" value="1"/>
</dbReference>
<dbReference type="Pfam" id="PF00046">
    <property type="entry name" value="Homeodomain"/>
    <property type="match status" value="1"/>
</dbReference>
<dbReference type="SMART" id="SM00389">
    <property type="entry name" value="HOX"/>
    <property type="match status" value="1"/>
</dbReference>
<dbReference type="SUPFAM" id="SSF46689">
    <property type="entry name" value="Homeodomain-like"/>
    <property type="match status" value="1"/>
</dbReference>
<dbReference type="PROSITE" id="PS50071">
    <property type="entry name" value="HOMEOBOX_2"/>
    <property type="match status" value="1"/>
</dbReference>
<evidence type="ECO:0000250" key="1"/>
<evidence type="ECO:0000255" key="2">
    <source>
        <dbReference type="PROSITE-ProRule" id="PRU00108"/>
    </source>
</evidence>
<evidence type="ECO:0000256" key="3">
    <source>
        <dbReference type="SAM" id="MobiDB-lite"/>
    </source>
</evidence>
<evidence type="ECO:0000305" key="4"/>
<accession>Q5W7C3</accession>
<accession>A0A0P0WHB5</accession>
<accession>A3AZE0</accession>
<accession>Q9LIX7</accession>